<proteinExistence type="predicted"/>
<dbReference type="EMBL" id="Z37984">
    <property type="protein sequence ID" value="CAA86062.1"/>
    <property type="molecule type" value="Genomic_DNA"/>
</dbReference>
<dbReference type="PIR" id="I39491">
    <property type="entry name" value="I39491"/>
</dbReference>
<dbReference type="SMR" id="P45674"/>
<dbReference type="GO" id="GO:0005886">
    <property type="term" value="C:plasma membrane"/>
    <property type="evidence" value="ECO:0007669"/>
    <property type="project" value="TreeGrafter"/>
</dbReference>
<dbReference type="GO" id="GO:0020037">
    <property type="term" value="F:heme binding"/>
    <property type="evidence" value="ECO:0007669"/>
    <property type="project" value="InterPro"/>
</dbReference>
<dbReference type="GO" id="GO:0017004">
    <property type="term" value="P:cytochrome complex assembly"/>
    <property type="evidence" value="ECO:0007669"/>
    <property type="project" value="InterPro"/>
</dbReference>
<dbReference type="InterPro" id="IPR002541">
    <property type="entry name" value="Cyt_c_assembly"/>
</dbReference>
<dbReference type="InterPro" id="IPR052372">
    <property type="entry name" value="YpjD/HemX"/>
</dbReference>
<dbReference type="PANTHER" id="PTHR38034">
    <property type="entry name" value="INNER MEMBRANE PROTEIN YPJD"/>
    <property type="match status" value="1"/>
</dbReference>
<dbReference type="PANTHER" id="PTHR38034:SF1">
    <property type="entry name" value="INNER MEMBRANE PROTEIN YPJD"/>
    <property type="match status" value="1"/>
</dbReference>
<dbReference type="Pfam" id="PF01578">
    <property type="entry name" value="Cytochrom_C_asm"/>
    <property type="match status" value="1"/>
</dbReference>
<reference key="1">
    <citation type="journal article" date="1995" name="Can. J. Microbiol.">
        <title>The ntrBC genes of Azospirillum brasilense are part of a nifR3-like-ntrB-ntrC operon and are negatively regulated.</title>
        <authorList>
            <person name="Machado H.B."/>
            <person name="Yates M.G."/>
            <person name="Funayama S."/>
            <person name="Rigo L.U."/>
            <person name="Steffens M.B.R."/>
            <person name="Souza E.M."/>
            <person name="Pedrosa F.O."/>
        </authorList>
    </citation>
    <scope>NUCLEOTIDE SEQUENCE [GENOMIC DNA]</scope>
    <source>
        <strain>ATCC 29145 / DSM 1690 / IMET 11303 / Sp7</strain>
    </source>
</reference>
<sequence length="271" mass="28754">MSQNIVYSLTALMALLPASIYPYHRIAGQGADGRSAYFWGALVLGFAGPAAWALTQVAGRWHTGLSTALWITIAACMLLFMAMSALTRSAWRLSPLLLPYLLTVGAFATLAQQAPAPVVRGGAPGIWIDLHIAVSVITYALLTMAAVASLAAFLQERALKSKRPTPLTRFLPPVTESERMQLHLLGASEAVLGAGLATGMAVLYYETGALLRADHKTLLSVASFVVIGGLLLAHARTGVRGRMAARLVLIAYLLLTLAYPGVKFVTDVLLG</sequence>
<name>YNR3_AZOBR</name>
<accession>P45674</accession>
<feature type="chain" id="PRO_0000066344" description="Uncharacterized 28.8 kDa protein in nifR3-like 5'region">
    <location>
        <begin position="1"/>
        <end position="271"/>
    </location>
</feature>
<organism>
    <name type="scientific">Azospirillum brasilense</name>
    <dbReference type="NCBI Taxonomy" id="192"/>
    <lineage>
        <taxon>Bacteria</taxon>
        <taxon>Pseudomonadati</taxon>
        <taxon>Pseudomonadota</taxon>
        <taxon>Alphaproteobacteria</taxon>
        <taxon>Rhodospirillales</taxon>
        <taxon>Azospirillaceae</taxon>
        <taxon>Azospirillum</taxon>
    </lineage>
</organism>
<protein>
    <recommendedName>
        <fullName>Uncharacterized 28.8 kDa protein in nifR3-like 5'region</fullName>
    </recommendedName>
    <alternativeName>
        <fullName>ORF5</fullName>
    </alternativeName>
</protein>